<name>PAX_I69A0</name>
<dbReference type="EMBL" id="AY210196">
    <property type="status" value="NOT_ANNOTATED_CDS"/>
    <property type="molecule type" value="Genomic_RNA"/>
</dbReference>
<dbReference type="SMR" id="P0CK85"/>
<dbReference type="GO" id="GO:0003723">
    <property type="term" value="F:RNA binding"/>
    <property type="evidence" value="ECO:0007669"/>
    <property type="project" value="InterPro"/>
</dbReference>
<dbReference type="GO" id="GO:0039694">
    <property type="term" value="P:viral RNA genome replication"/>
    <property type="evidence" value="ECO:0007669"/>
    <property type="project" value="InterPro"/>
</dbReference>
<dbReference type="GO" id="GO:0075523">
    <property type="term" value="P:viral translational frameshifting"/>
    <property type="evidence" value="ECO:0007669"/>
    <property type="project" value="UniProtKB-KW"/>
</dbReference>
<dbReference type="FunFam" id="3.40.91.90:FF:000001">
    <property type="entry name" value="Polymerase acidic protein"/>
    <property type="match status" value="1"/>
</dbReference>
<dbReference type="Gene3D" id="3.40.91.90">
    <property type="entry name" value="Influenza RNA-dependent RNA polymerase subunit PA, endonuclease domain"/>
    <property type="match status" value="1"/>
</dbReference>
<dbReference type="InterPro" id="IPR001009">
    <property type="entry name" value="PA/PA-X"/>
</dbReference>
<dbReference type="InterPro" id="IPR038372">
    <property type="entry name" value="PA/PA-X_sf"/>
</dbReference>
<dbReference type="Pfam" id="PF00603">
    <property type="entry name" value="Flu_PA"/>
    <property type="match status" value="1"/>
</dbReference>
<keyword id="KW-1132">Decay of host mRNAs by virus</keyword>
<keyword id="KW-1262">Eukaryotic host gene expression shutoff by virus</keyword>
<keyword id="KW-1035">Host cytoplasm</keyword>
<keyword id="KW-1190">Host gene expression shutoff by virus</keyword>
<keyword id="KW-1192">Host mRNA suppression by virus</keyword>
<keyword id="KW-1048">Host nucleus</keyword>
<keyword id="KW-0945">Host-virus interaction</keyword>
<keyword id="KW-0688">Ribosomal frameshifting</keyword>
<proteinExistence type="inferred from homology"/>
<organismHost>
    <name type="scientific">Aves</name>
    <dbReference type="NCBI Taxonomy" id="8782"/>
</organismHost>
<organismHost>
    <name type="scientific">Homo sapiens</name>
    <name type="common">Human</name>
    <dbReference type="NCBI Taxonomy" id="9606"/>
</organismHost>
<organismHost>
    <name type="scientific">Mysticeti</name>
    <name type="common">baleen whales</name>
    <dbReference type="NCBI Taxonomy" id="9761"/>
</organismHost>
<organismHost>
    <name type="scientific">Phocidae</name>
    <name type="common">true seals</name>
    <dbReference type="NCBI Taxonomy" id="9709"/>
</organismHost>
<organismHost>
    <name type="scientific">Sus scrofa</name>
    <name type="common">Pig</name>
    <dbReference type="NCBI Taxonomy" id="9823"/>
</organismHost>
<sequence>MEDFVRQCFNPMIVELAEKAMKEYGEDLKIETNKFAAICTHLEVCFMYSDFHFINEQGESIVVELDDPNALLKHRFEIIEGRDRTMAWTVVNSICNTTGAEKPKFLPDLYDYKENRFIEIGVTRREVHIYYLEKANKIKSENTHIHIFSFTGEEMATKADYTLDEESRARIKTRLFTIRQEMANRGLWDSFVSPKEAKKQLKKDLKSQEQCAGLPTKVSRRTSPALRILEPMWMDSNRTAALRASFLKCPKK</sequence>
<gene>
    <name type="primary">PA</name>
</gene>
<comment type="function">
    <text evidence="1 4">Plays a major role in the shutoff of the host protein expression by cleaving mRNAs probably via an endonuclease activity. This host shutoff allows the virus to escape from the host antiviral response (By similarity). Hijacks host RNA splicing machinery to selectively target host RNAs containing introns for destruction. This may explain the preferential degradation of RNAs that have undergone co- or post-transcriptional processing (By similarity).</text>
</comment>
<comment type="subcellular location">
    <subcellularLocation>
        <location evidence="4">Host cytoplasm</location>
    </subcellularLocation>
    <subcellularLocation>
        <location evidence="4">Host nucleus</location>
    </subcellularLocation>
</comment>
<comment type="alternative products">
    <event type="ribosomal frameshifting"/>
    <isoform>
        <id>P0CK85-1</id>
        <name>PA-X</name>
        <sequence type="displayed"/>
    </isoform>
    <isoform>
        <id>Q6XTB6-1</id>
        <name>PA</name>
        <sequence type="external"/>
    </isoform>
</comment>
<comment type="domain">
    <text evidence="1 4">The probable endonuclease active site in the N-terminus and the basic amino acid cluster in the C-terminus are important for the shutoff activity. The C-terminus acts as a nuclear localization signal (By similarity). The C-terminus is recruited to host protein complexes involved in nuclear Pol II RNA processing (By similarity).</text>
</comment>
<comment type="similarity">
    <text evidence="6">Belongs to the influenza viruses PA-X family.</text>
</comment>
<feature type="chain" id="PRO_0000419368" description="Protein PA-X">
    <location>
        <begin position="1"/>
        <end position="252"/>
    </location>
</feature>
<feature type="active site" evidence="2">
    <location>
        <position position="80"/>
    </location>
</feature>
<feature type="active site" evidence="2">
    <location>
        <position position="108"/>
    </location>
</feature>
<feature type="site" description="Important for efficient shutoff activity" evidence="5">
    <location>
        <position position="28"/>
    </location>
</feature>
<feature type="site" description="Important for efficient shutoff activity" evidence="5">
    <location>
        <position position="65"/>
    </location>
</feature>
<feature type="site" description="Important for efficient shutoff activity and nuclear localization" evidence="4">
    <location>
        <position position="195"/>
    </location>
</feature>
<feature type="site" description="Important for efficient shutoff activity and nuclear localization" evidence="4">
    <location>
        <position position="198"/>
    </location>
</feature>
<feature type="site" description="Important for efficient shutoff activity and nuclear localization" evidence="4">
    <location>
        <position position="199"/>
    </location>
</feature>
<feature type="site" description="Important for efficient shutoff activity" evidence="3">
    <location>
        <position position="202"/>
    </location>
</feature>
<feature type="site" description="Important for efficient shutoff activity" evidence="3">
    <location>
        <position position="203"/>
    </location>
</feature>
<feature type="site" description="Important for efficient shutoff activity" evidence="3">
    <location>
        <position position="206"/>
    </location>
</feature>
<protein>
    <recommendedName>
        <fullName>Protein PA-X</fullName>
    </recommendedName>
</protein>
<organism>
    <name type="scientific">Influenza A virus (strain A/England/878/1969 H3N2)</name>
    <dbReference type="NCBI Taxonomy" id="387147"/>
    <lineage>
        <taxon>Viruses</taxon>
        <taxon>Riboviria</taxon>
        <taxon>Orthornavirae</taxon>
        <taxon>Negarnaviricota</taxon>
        <taxon>Polyploviricotina</taxon>
        <taxon>Insthoviricetes</taxon>
        <taxon>Articulavirales</taxon>
        <taxon>Orthomyxoviridae</taxon>
        <taxon>Alphainfluenzavirus</taxon>
        <taxon>Alphainfluenzavirus influenzae</taxon>
        <taxon>Influenza A virus</taxon>
    </lineage>
</organism>
<evidence type="ECO:0000250" key="1">
    <source>
        <dbReference type="UniProtKB" id="P0CK64"/>
    </source>
</evidence>
<evidence type="ECO:0000250" key="2">
    <source>
        <dbReference type="UniProtKB" id="P0CK68"/>
    </source>
</evidence>
<evidence type="ECO:0000250" key="3">
    <source>
        <dbReference type="UniProtKB" id="P0DJW8"/>
    </source>
</evidence>
<evidence type="ECO:0000250" key="4">
    <source>
        <dbReference type="UniProtKB" id="P0DXO5"/>
    </source>
</evidence>
<evidence type="ECO:0000250" key="5">
    <source>
        <dbReference type="UniProtKB" id="P0DXO6"/>
    </source>
</evidence>
<evidence type="ECO:0000305" key="6"/>
<accession>P0CK85</accession>
<reference key="1">
    <citation type="journal article" date="2004" name="Virology">
        <title>Genetic analysis of human H2N2 and early H3N2 influenza viruses, 1957-1972: evidence for genetic divergence and multiple reassortment events.</title>
        <authorList>
            <person name="Lindstrom S.E."/>
            <person name="Cox N.J."/>
            <person name="Klimov A."/>
        </authorList>
    </citation>
    <scope>NUCLEOTIDE SEQUENCE [GENOMIC RNA]</scope>
</reference>